<accession>Q2JRV8</accession>
<gene>
    <name evidence="1" type="primary">hisA</name>
    <name type="ordered locus">CYA_2513</name>
</gene>
<proteinExistence type="inferred from homology"/>
<sequence length="261" mass="27345">MPHASAFLEVIPAIDLLQGRAVRLYQGDYAQAEQVAADPVQQAEIWATQGAPRLHVVDLDGAKSGDPVNLPIIADIVRKLAIPVQVGGGIRSLERARQLLDLGVERVIVGTVAVEDPALLEAMTQALPGRIWVGIDARQGQVATRGWLSTTPLAATELVQRVQAQGAAGIIYTDIGRDGTLAGPNLEQLRQILAVSRLPVIASGGIGSLTDLLALLSLPGLAGAILGKALYSGAISLPEALRAVGPGRWQDLPPETGSRWA</sequence>
<keyword id="KW-0028">Amino-acid biosynthesis</keyword>
<keyword id="KW-0963">Cytoplasm</keyword>
<keyword id="KW-0368">Histidine biosynthesis</keyword>
<keyword id="KW-0413">Isomerase</keyword>
<dbReference type="EC" id="5.3.1.16" evidence="1"/>
<dbReference type="EMBL" id="CP000239">
    <property type="protein sequence ID" value="ABD00633.1"/>
    <property type="molecule type" value="Genomic_DNA"/>
</dbReference>
<dbReference type="RefSeq" id="WP_011431306.1">
    <property type="nucleotide sequence ID" value="NC_007775.1"/>
</dbReference>
<dbReference type="SMR" id="Q2JRV8"/>
<dbReference type="STRING" id="321327.CYA_2513"/>
<dbReference type="KEGG" id="cya:CYA_2513"/>
<dbReference type="eggNOG" id="COG0106">
    <property type="taxonomic scope" value="Bacteria"/>
</dbReference>
<dbReference type="HOGENOM" id="CLU_048577_1_1_3"/>
<dbReference type="OrthoDB" id="9807749at2"/>
<dbReference type="UniPathway" id="UPA00031">
    <property type="reaction ID" value="UER00009"/>
</dbReference>
<dbReference type="Proteomes" id="UP000008818">
    <property type="component" value="Chromosome"/>
</dbReference>
<dbReference type="GO" id="GO:0005737">
    <property type="term" value="C:cytoplasm"/>
    <property type="evidence" value="ECO:0007669"/>
    <property type="project" value="UniProtKB-SubCell"/>
</dbReference>
<dbReference type="GO" id="GO:0003949">
    <property type="term" value="F:1-(5-phosphoribosyl)-5-[(5-phosphoribosylamino)methylideneamino]imidazole-4-carboxamide isomerase activity"/>
    <property type="evidence" value="ECO:0007669"/>
    <property type="project" value="UniProtKB-UniRule"/>
</dbReference>
<dbReference type="GO" id="GO:0000105">
    <property type="term" value="P:L-histidine biosynthetic process"/>
    <property type="evidence" value="ECO:0007669"/>
    <property type="project" value="UniProtKB-UniRule"/>
</dbReference>
<dbReference type="GO" id="GO:0000162">
    <property type="term" value="P:L-tryptophan biosynthetic process"/>
    <property type="evidence" value="ECO:0007669"/>
    <property type="project" value="TreeGrafter"/>
</dbReference>
<dbReference type="CDD" id="cd04732">
    <property type="entry name" value="HisA"/>
    <property type="match status" value="1"/>
</dbReference>
<dbReference type="FunFam" id="3.20.20.70:FF:000009">
    <property type="entry name" value="1-(5-phosphoribosyl)-5-[(5-phosphoribosylamino)methylideneamino] imidazole-4-carboxamide isomerase"/>
    <property type="match status" value="1"/>
</dbReference>
<dbReference type="Gene3D" id="3.20.20.70">
    <property type="entry name" value="Aldolase class I"/>
    <property type="match status" value="1"/>
</dbReference>
<dbReference type="HAMAP" id="MF_01014">
    <property type="entry name" value="HisA"/>
    <property type="match status" value="1"/>
</dbReference>
<dbReference type="InterPro" id="IPR013785">
    <property type="entry name" value="Aldolase_TIM"/>
</dbReference>
<dbReference type="InterPro" id="IPR006062">
    <property type="entry name" value="His_biosynth"/>
</dbReference>
<dbReference type="InterPro" id="IPR006063">
    <property type="entry name" value="HisA_bact_arch"/>
</dbReference>
<dbReference type="InterPro" id="IPR044524">
    <property type="entry name" value="Isoase_HisA-like"/>
</dbReference>
<dbReference type="InterPro" id="IPR023016">
    <property type="entry name" value="Isoase_HisA-like_bact"/>
</dbReference>
<dbReference type="InterPro" id="IPR011060">
    <property type="entry name" value="RibuloseP-bd_barrel"/>
</dbReference>
<dbReference type="NCBIfam" id="TIGR00007">
    <property type="entry name" value="1-(5-phosphoribosyl)-5-[(5-phosphoribosylamino)methylideneamino]imidazole-4-carboxamide isomerase"/>
    <property type="match status" value="1"/>
</dbReference>
<dbReference type="PANTHER" id="PTHR43090">
    <property type="entry name" value="1-(5-PHOSPHORIBOSYL)-5-[(5-PHOSPHORIBOSYLAMINO)METHYLIDENEAMINO] IMIDAZOLE-4-CARBOXAMIDE ISOMERASE"/>
    <property type="match status" value="1"/>
</dbReference>
<dbReference type="PANTHER" id="PTHR43090:SF2">
    <property type="entry name" value="1-(5-PHOSPHORIBOSYL)-5-[(5-PHOSPHORIBOSYLAMINO)METHYLIDENEAMINO] IMIDAZOLE-4-CARBOXAMIDE ISOMERASE"/>
    <property type="match status" value="1"/>
</dbReference>
<dbReference type="Pfam" id="PF00977">
    <property type="entry name" value="His_biosynth"/>
    <property type="match status" value="1"/>
</dbReference>
<dbReference type="SUPFAM" id="SSF51366">
    <property type="entry name" value="Ribulose-phoshate binding barrel"/>
    <property type="match status" value="1"/>
</dbReference>
<evidence type="ECO:0000255" key="1">
    <source>
        <dbReference type="HAMAP-Rule" id="MF_01014"/>
    </source>
</evidence>
<name>HIS4_SYNJA</name>
<protein>
    <recommendedName>
        <fullName evidence="1">1-(5-phosphoribosyl)-5-[(5-phosphoribosylamino)methylideneamino] imidazole-4-carboxamide isomerase</fullName>
        <ecNumber evidence="1">5.3.1.16</ecNumber>
    </recommendedName>
    <alternativeName>
        <fullName evidence="1">Phosphoribosylformimino-5-aminoimidazole carboxamide ribotide isomerase</fullName>
    </alternativeName>
</protein>
<feature type="chain" id="PRO_0000290555" description="1-(5-phosphoribosyl)-5-[(5-phosphoribosylamino)methylideneamino] imidazole-4-carboxamide isomerase">
    <location>
        <begin position="1"/>
        <end position="261"/>
    </location>
</feature>
<feature type="active site" description="Proton acceptor" evidence="1">
    <location>
        <position position="15"/>
    </location>
</feature>
<feature type="active site" description="Proton donor" evidence="1">
    <location>
        <position position="136"/>
    </location>
</feature>
<reference key="1">
    <citation type="journal article" date="2007" name="ISME J.">
        <title>Population level functional diversity in a microbial community revealed by comparative genomic and metagenomic analyses.</title>
        <authorList>
            <person name="Bhaya D."/>
            <person name="Grossman A.R."/>
            <person name="Steunou A.-S."/>
            <person name="Khuri N."/>
            <person name="Cohan F.M."/>
            <person name="Hamamura N."/>
            <person name="Melendrez M.C."/>
            <person name="Bateson M.M."/>
            <person name="Ward D.M."/>
            <person name="Heidelberg J.F."/>
        </authorList>
    </citation>
    <scope>NUCLEOTIDE SEQUENCE [LARGE SCALE GENOMIC DNA]</scope>
    <source>
        <strain>JA-3-3Ab</strain>
    </source>
</reference>
<comment type="catalytic activity">
    <reaction evidence="1">
        <text>1-(5-phospho-beta-D-ribosyl)-5-[(5-phospho-beta-D-ribosylamino)methylideneamino]imidazole-4-carboxamide = 5-[(5-phospho-1-deoxy-D-ribulos-1-ylimino)methylamino]-1-(5-phospho-beta-D-ribosyl)imidazole-4-carboxamide</text>
        <dbReference type="Rhea" id="RHEA:15469"/>
        <dbReference type="ChEBI" id="CHEBI:58435"/>
        <dbReference type="ChEBI" id="CHEBI:58525"/>
        <dbReference type="EC" id="5.3.1.16"/>
    </reaction>
</comment>
<comment type="pathway">
    <text evidence="1">Amino-acid biosynthesis; L-histidine biosynthesis; L-histidine from 5-phospho-alpha-D-ribose 1-diphosphate: step 4/9.</text>
</comment>
<comment type="subcellular location">
    <subcellularLocation>
        <location evidence="1">Cytoplasm</location>
    </subcellularLocation>
</comment>
<comment type="similarity">
    <text evidence="1">Belongs to the HisA/HisF family.</text>
</comment>
<organism>
    <name type="scientific">Synechococcus sp. (strain JA-3-3Ab)</name>
    <name type="common">Cyanobacteria bacterium Yellowstone A-Prime</name>
    <dbReference type="NCBI Taxonomy" id="321327"/>
    <lineage>
        <taxon>Bacteria</taxon>
        <taxon>Bacillati</taxon>
        <taxon>Cyanobacteriota</taxon>
        <taxon>Cyanophyceae</taxon>
        <taxon>Synechococcales</taxon>
        <taxon>Synechococcaceae</taxon>
        <taxon>Synechococcus</taxon>
    </lineage>
</organism>